<keyword id="KW-1015">Disulfide bond</keyword>
<keyword id="KW-0325">Glycoprotein</keyword>
<keyword id="KW-0391">Immunity</keyword>
<keyword id="KW-0472">Membrane</keyword>
<keyword id="KW-0490">MHC I</keyword>
<keyword id="KW-0597">Phosphoprotein</keyword>
<keyword id="KW-1185">Reference proteome</keyword>
<keyword id="KW-0732">Signal</keyword>
<keyword id="KW-0812">Transmembrane</keyword>
<keyword id="KW-1133">Transmembrane helix</keyword>
<accession>P30686</accession>
<proteinExistence type="evidence at transcript level"/>
<dbReference type="EMBL" id="D11383">
    <property type="protein sequence ID" value="BAA01979.1"/>
    <property type="status" value="ALT_INIT"/>
    <property type="molecule type" value="mRNA"/>
</dbReference>
<dbReference type="SMR" id="P30686"/>
<dbReference type="FunCoup" id="P30686">
    <property type="interactions" value="1584"/>
</dbReference>
<dbReference type="STRING" id="9598.ENSPTRP00000065181"/>
<dbReference type="eggNOG" id="ENOG502RQEK">
    <property type="taxonomic scope" value="Eukaryota"/>
</dbReference>
<dbReference type="InParanoid" id="P30686"/>
<dbReference type="Proteomes" id="UP000002277">
    <property type="component" value="Unplaced"/>
</dbReference>
<dbReference type="GO" id="GO:0031901">
    <property type="term" value="C:early endosome membrane"/>
    <property type="evidence" value="ECO:0007669"/>
    <property type="project" value="UniProtKB-ARBA"/>
</dbReference>
<dbReference type="GO" id="GO:0012507">
    <property type="term" value="C:ER to Golgi transport vesicle membrane"/>
    <property type="evidence" value="ECO:0007669"/>
    <property type="project" value="UniProtKB-ARBA"/>
</dbReference>
<dbReference type="GO" id="GO:0009897">
    <property type="term" value="C:external side of plasma membrane"/>
    <property type="evidence" value="ECO:0000318"/>
    <property type="project" value="GO_Central"/>
</dbReference>
<dbReference type="GO" id="GO:0005615">
    <property type="term" value="C:extracellular space"/>
    <property type="evidence" value="ECO:0000318"/>
    <property type="project" value="GO_Central"/>
</dbReference>
<dbReference type="GO" id="GO:0098553">
    <property type="term" value="C:lumenal side of endoplasmic reticulum membrane"/>
    <property type="evidence" value="ECO:0007669"/>
    <property type="project" value="UniProtKB-ARBA"/>
</dbReference>
<dbReference type="GO" id="GO:0042612">
    <property type="term" value="C:MHC class I protein complex"/>
    <property type="evidence" value="ECO:0007669"/>
    <property type="project" value="UniProtKB-KW"/>
</dbReference>
<dbReference type="GO" id="GO:0030670">
    <property type="term" value="C:phagocytic vesicle membrane"/>
    <property type="evidence" value="ECO:0007669"/>
    <property type="project" value="UniProtKB-ARBA"/>
</dbReference>
<dbReference type="GO" id="GO:0055038">
    <property type="term" value="C:recycling endosome membrane"/>
    <property type="evidence" value="ECO:0007669"/>
    <property type="project" value="UniProtKB-ARBA"/>
</dbReference>
<dbReference type="GO" id="GO:0042605">
    <property type="term" value="F:peptide antigen binding"/>
    <property type="evidence" value="ECO:0000318"/>
    <property type="project" value="GO_Central"/>
</dbReference>
<dbReference type="GO" id="GO:0005102">
    <property type="term" value="F:signaling receptor binding"/>
    <property type="evidence" value="ECO:0000318"/>
    <property type="project" value="GO_Central"/>
</dbReference>
<dbReference type="GO" id="GO:0002486">
    <property type="term" value="P:antigen processing and presentation of endogenous peptide antigen via MHC class I via ER pathway, TAP-independent"/>
    <property type="evidence" value="ECO:0000318"/>
    <property type="project" value="GO_Central"/>
</dbReference>
<dbReference type="GO" id="GO:0002476">
    <property type="term" value="P:antigen processing and presentation of endogenous peptide antigen via MHC class Ib"/>
    <property type="evidence" value="ECO:0000318"/>
    <property type="project" value="GO_Central"/>
</dbReference>
<dbReference type="GO" id="GO:0006955">
    <property type="term" value="P:immune response"/>
    <property type="evidence" value="ECO:0000318"/>
    <property type="project" value="GO_Central"/>
</dbReference>
<dbReference type="GO" id="GO:0001916">
    <property type="term" value="P:positive regulation of T cell mediated cytotoxicity"/>
    <property type="evidence" value="ECO:0000318"/>
    <property type="project" value="GO_Central"/>
</dbReference>
<dbReference type="CDD" id="cd07698">
    <property type="entry name" value="IgC1_MHC_I_alpha3"/>
    <property type="match status" value="1"/>
</dbReference>
<dbReference type="FunFam" id="2.60.40.10:FF:000014">
    <property type="entry name" value="H-2 class I histocompatibility antigen, alpha chain"/>
    <property type="match status" value="1"/>
</dbReference>
<dbReference type="FunFam" id="3.30.500.10:FF:000001">
    <property type="entry name" value="H-2 class I histocompatibility antigen, alpha chain"/>
    <property type="match status" value="1"/>
</dbReference>
<dbReference type="Gene3D" id="2.60.40.10">
    <property type="entry name" value="Immunoglobulins"/>
    <property type="match status" value="1"/>
</dbReference>
<dbReference type="Gene3D" id="3.30.500.10">
    <property type="entry name" value="MHC class I-like antigen recognition-like"/>
    <property type="match status" value="1"/>
</dbReference>
<dbReference type="InterPro" id="IPR007110">
    <property type="entry name" value="Ig-like_dom"/>
</dbReference>
<dbReference type="InterPro" id="IPR036179">
    <property type="entry name" value="Ig-like_dom_sf"/>
</dbReference>
<dbReference type="InterPro" id="IPR013783">
    <property type="entry name" value="Ig-like_fold"/>
</dbReference>
<dbReference type="InterPro" id="IPR003006">
    <property type="entry name" value="Ig/MHC_CS"/>
</dbReference>
<dbReference type="InterPro" id="IPR003597">
    <property type="entry name" value="Ig_C1-set"/>
</dbReference>
<dbReference type="InterPro" id="IPR050208">
    <property type="entry name" value="MHC_class-I_related"/>
</dbReference>
<dbReference type="InterPro" id="IPR011161">
    <property type="entry name" value="MHC_I-like_Ag-recog"/>
</dbReference>
<dbReference type="InterPro" id="IPR037055">
    <property type="entry name" value="MHC_I-like_Ag-recog_sf"/>
</dbReference>
<dbReference type="InterPro" id="IPR011162">
    <property type="entry name" value="MHC_I/II-like_Ag-recog"/>
</dbReference>
<dbReference type="InterPro" id="IPR001039">
    <property type="entry name" value="MHC_I_a_a1/a2"/>
</dbReference>
<dbReference type="InterPro" id="IPR010579">
    <property type="entry name" value="MHC_I_a_C"/>
</dbReference>
<dbReference type="PANTHER" id="PTHR16675:SF251">
    <property type="entry name" value="HLA CLASS I HISTOCOMPATIBILITY ANTIGEN, C ALPHA CHAIN"/>
    <property type="match status" value="1"/>
</dbReference>
<dbReference type="PANTHER" id="PTHR16675">
    <property type="entry name" value="MHC CLASS I-RELATED"/>
    <property type="match status" value="1"/>
</dbReference>
<dbReference type="Pfam" id="PF07654">
    <property type="entry name" value="C1-set"/>
    <property type="match status" value="1"/>
</dbReference>
<dbReference type="Pfam" id="PF00129">
    <property type="entry name" value="MHC_I"/>
    <property type="match status" value="1"/>
</dbReference>
<dbReference type="Pfam" id="PF06623">
    <property type="entry name" value="MHC_I_C"/>
    <property type="match status" value="1"/>
</dbReference>
<dbReference type="PRINTS" id="PR01638">
    <property type="entry name" value="MHCCLASSI"/>
</dbReference>
<dbReference type="SMART" id="SM00407">
    <property type="entry name" value="IGc1"/>
    <property type="match status" value="1"/>
</dbReference>
<dbReference type="SUPFAM" id="SSF48726">
    <property type="entry name" value="Immunoglobulin"/>
    <property type="match status" value="1"/>
</dbReference>
<dbReference type="SUPFAM" id="SSF54452">
    <property type="entry name" value="MHC antigen-recognition domain"/>
    <property type="match status" value="1"/>
</dbReference>
<dbReference type="PROSITE" id="PS50835">
    <property type="entry name" value="IG_LIKE"/>
    <property type="match status" value="1"/>
</dbReference>
<dbReference type="PROSITE" id="PS00290">
    <property type="entry name" value="IG_MHC"/>
    <property type="match status" value="1"/>
</dbReference>
<reference key="1">
    <citation type="journal article" date="1992" name="Virology">
        <title>Interferon-inducible gene expression in chimpanzee liver infected with hepatitis C virus.</title>
        <authorList>
            <person name="Kato T."/>
            <person name="Esumi M."/>
            <person name="Yamashita S."/>
            <person name="Abe K."/>
            <person name="Shikata T."/>
        </authorList>
    </citation>
    <scope>NUCLEOTIDE SEQUENCE [MRNA]</scope>
</reference>
<comment type="function">
    <text>Involved in the presentation of foreign antigens to the immune system.</text>
</comment>
<comment type="subunit">
    <text>Heterodimer of an alpha chain and a beta chain (beta-2-microglobulin).</text>
</comment>
<comment type="subcellular location">
    <subcellularLocation>
        <location>Membrane</location>
        <topology>Single-pass type I membrane protein</topology>
    </subcellularLocation>
</comment>
<comment type="similarity">
    <text evidence="5">Belongs to the MHC class I family.</text>
</comment>
<comment type="sequence caution" evidence="5">
    <conflict type="erroneous initiation">
        <sequence resource="EMBL-CDS" id="BAA01979"/>
    </conflict>
</comment>
<organism>
    <name type="scientific">Pan troglodytes</name>
    <name type="common">Chimpanzee</name>
    <dbReference type="NCBI Taxonomy" id="9598"/>
    <lineage>
        <taxon>Eukaryota</taxon>
        <taxon>Metazoa</taxon>
        <taxon>Chordata</taxon>
        <taxon>Craniata</taxon>
        <taxon>Vertebrata</taxon>
        <taxon>Euteleostomi</taxon>
        <taxon>Mammalia</taxon>
        <taxon>Eutheria</taxon>
        <taxon>Euarchontoglires</taxon>
        <taxon>Primates</taxon>
        <taxon>Haplorrhini</taxon>
        <taxon>Catarrhini</taxon>
        <taxon>Hominidae</taxon>
        <taxon>Pan</taxon>
    </lineage>
</organism>
<sequence length="366" mass="40843">MRVTAPRTLLLLLSGGLALTETWAGSHSLRYFDTAVSRPGRREPRFISVGYVDDTQFVRFDSDAASPRGEPRAPWVEQEGPEYWDRETQKYKRQAQADRVSLRNLRGYYNQSEDGSHTLQWMYGCDLGPDGRLLRGYGQSAYDGKDYIALNEDLRSWTAADTAAQITQRKWEAAREAEQLRAYLEGKRVESCRRYLENGKETLQRTECPKTHMTHHPVSDHEATLRCWALAFYPAEITLTWQRDGEDQIQDTELVETRPAGDGTFQKWAAVVVPSGQEQRYTCHVQHEGLPEPLTLRWKPTSQPTIPIVGIVAGLAVLAVLAVLGAVVTAMMCRRKSSGGKGGSCSQAACSNSAQGSDESLIACKA</sequence>
<name>1C01_PANTR</name>
<feature type="signal peptide" evidence="1">
    <location>
        <begin position="1"/>
        <end position="24"/>
    </location>
</feature>
<feature type="chain" id="PRO_0000018914" description="Patr class I histocompatibility antigen, C alpha chain">
    <location>
        <begin position="25"/>
        <end position="366"/>
    </location>
</feature>
<feature type="topological domain" description="Extracellular" evidence="3">
    <location>
        <begin position="25"/>
        <end position="308"/>
    </location>
</feature>
<feature type="transmembrane region" description="Helical" evidence="3">
    <location>
        <begin position="309"/>
        <end position="332"/>
    </location>
</feature>
<feature type="topological domain" description="Cytoplasmic" evidence="3">
    <location>
        <begin position="333"/>
        <end position="366"/>
    </location>
</feature>
<feature type="domain" description="Ig-like C1-type">
    <location>
        <begin position="209"/>
        <end position="297"/>
    </location>
</feature>
<feature type="region of interest" description="Alpha-1">
    <location>
        <begin position="25"/>
        <end position="114"/>
    </location>
</feature>
<feature type="region of interest" description="Alpha-2">
    <location>
        <begin position="115"/>
        <end position="206"/>
    </location>
</feature>
<feature type="region of interest" description="Alpha-3">
    <location>
        <begin position="207"/>
        <end position="298"/>
    </location>
</feature>
<feature type="region of interest" description="Connecting peptide">
    <location>
        <begin position="299"/>
        <end position="308"/>
    </location>
</feature>
<feature type="modified residue" description="Phosphoserine" evidence="2">
    <location>
        <position position="357"/>
    </location>
</feature>
<feature type="modified residue" description="Phosphoserine" evidence="2">
    <location>
        <position position="360"/>
    </location>
</feature>
<feature type="glycosylation site" description="N-linked (GlcNAc...) asparagine" evidence="1">
    <location>
        <position position="110"/>
    </location>
</feature>
<feature type="disulfide bond" evidence="4">
    <location>
        <begin position="125"/>
        <end position="192"/>
    </location>
</feature>
<feature type="disulfide bond" evidence="4">
    <location>
        <begin position="227"/>
        <end position="283"/>
    </location>
</feature>
<evidence type="ECO:0000250" key="1"/>
<evidence type="ECO:0000250" key="2">
    <source>
        <dbReference type="UniProtKB" id="P01900"/>
    </source>
</evidence>
<evidence type="ECO:0000255" key="3"/>
<evidence type="ECO:0000255" key="4">
    <source>
        <dbReference type="PROSITE-ProRule" id="PRU00114"/>
    </source>
</evidence>
<evidence type="ECO:0000305" key="5"/>
<protein>
    <recommendedName>
        <fullName>Patr class I histocompatibility antigen, C alpha chain</fullName>
    </recommendedName>
    <alternativeName>
        <fullName>ChLa class I histocompatibility antigen, C alpha chain</fullName>
    </alternativeName>
</protein>